<evidence type="ECO:0000250" key="1"/>
<evidence type="ECO:0000256" key="2">
    <source>
        <dbReference type="SAM" id="MobiDB-lite"/>
    </source>
</evidence>
<evidence type="ECO:0000305" key="3"/>
<proteinExistence type="evidence at transcript level"/>
<sequence>MSLEYLPPVRRRIGQYNHLRIYKKILLLKSNFEKLNFFLGNLFPEELHDSKIHVYFEVRLGCRIPDCIIVFRHFGEKLLKTFHCYFFEFKTTFAKSNLFSIQKNRTQKIQYLQGLRQLRQATDYLQQFVIKNESLCKVNPVICFFRQHGLKLDFVKTFIAKELQLSSTFLCNLFTKYQNDTVKSILSISNPTNFRRACQKYSNLYRGRYATTPKLGNSKTSKRKRRNSKKQDFKKLVKN</sequence>
<protein>
    <recommendedName>
        <fullName>Protein UL24 homolog</fullName>
    </recommendedName>
</protein>
<gene>
    <name type="primary">U49</name>
</gene>
<reference key="1">
    <citation type="journal article" date="1996" name="J. Virol.">
        <title>Determination and analysis of the complete nucleotide sequence of human herpesvirus.</title>
        <authorList>
            <person name="Nicholas J."/>
        </authorList>
    </citation>
    <scope>NUCLEOTIDE SEQUENCE [LARGE SCALE GENOMIC DNA]</scope>
</reference>
<keyword id="KW-1035">Host cytoplasm</keyword>
<keyword id="KW-1040">Host Golgi apparatus</keyword>
<keyword id="KW-1048">Host nucleus</keyword>
<keyword id="KW-0426">Late protein</keyword>
<keyword id="KW-1185">Reference proteome</keyword>
<keyword id="KW-0946">Virion</keyword>
<name>UL24_HHV7J</name>
<feature type="chain" id="PRO_0000115987" description="Protein UL24 homolog">
    <location>
        <begin position="1"/>
        <end position="239"/>
    </location>
</feature>
<feature type="region of interest" description="Disordered" evidence="2">
    <location>
        <begin position="212"/>
        <end position="239"/>
    </location>
</feature>
<feature type="compositionally biased region" description="Basic and acidic residues" evidence="2">
    <location>
        <begin position="229"/>
        <end position="239"/>
    </location>
</feature>
<organismHost>
    <name type="scientific">Homo sapiens</name>
    <name type="common">Human</name>
    <dbReference type="NCBI Taxonomy" id="9606"/>
</organismHost>
<accession>P52386</accession>
<comment type="function">
    <text evidence="1">May participate in nuclear egress of viral particles. Plays a role in the dispersal of several host nucleolar proteins including NCL/nucleolin and NPM1. Since deletion of host NCL/nucleolin negatively impact on nuclear egress, UL24 supposedly acts on this process through its effect on host nucleoli (By similarity).</text>
</comment>
<comment type="subcellular location">
    <subcellularLocation>
        <location evidence="1">Virion</location>
    </subcellularLocation>
    <subcellularLocation>
        <location evidence="1">Host cytoplasm</location>
    </subcellularLocation>
    <subcellularLocation>
        <location evidence="1">Host nucleus</location>
        <location evidence="1">Host nucleolus</location>
    </subcellularLocation>
    <subcellularLocation>
        <location evidence="1">Host Golgi apparatus</location>
    </subcellularLocation>
</comment>
<comment type="induction">
    <text>Expressed late in the infection cycle.</text>
</comment>
<comment type="similarity">
    <text evidence="3">Belongs to the herpesviridae UL24 family.</text>
</comment>
<dbReference type="EMBL" id="U43400">
    <property type="protein sequence ID" value="AAC54711.1"/>
    <property type="molecule type" value="Genomic_DNA"/>
</dbReference>
<dbReference type="PIR" id="T41951">
    <property type="entry name" value="T41951"/>
</dbReference>
<dbReference type="RefSeq" id="YP_073789.1">
    <property type="nucleotide sequence ID" value="NC_001716.2"/>
</dbReference>
<dbReference type="SMR" id="P52386"/>
<dbReference type="DNASU" id="3289507"/>
<dbReference type="GeneID" id="3289507"/>
<dbReference type="KEGG" id="vg:3289507"/>
<dbReference type="Proteomes" id="UP000009246">
    <property type="component" value="Segment"/>
</dbReference>
<dbReference type="GO" id="GO:0044177">
    <property type="term" value="C:host cell Golgi apparatus"/>
    <property type="evidence" value="ECO:0007669"/>
    <property type="project" value="UniProtKB-SubCell"/>
</dbReference>
<dbReference type="GO" id="GO:0044196">
    <property type="term" value="C:host cell nucleolus"/>
    <property type="evidence" value="ECO:0007669"/>
    <property type="project" value="UniProtKB-SubCell"/>
</dbReference>
<dbReference type="GO" id="GO:0044423">
    <property type="term" value="C:virion component"/>
    <property type="evidence" value="ECO:0007669"/>
    <property type="project" value="UniProtKB-KW"/>
</dbReference>
<dbReference type="InterPro" id="IPR002580">
    <property type="entry name" value="Herpes_UL24"/>
</dbReference>
<dbReference type="Pfam" id="PF01646">
    <property type="entry name" value="Herpes_UL24"/>
    <property type="match status" value="1"/>
</dbReference>
<organism>
    <name type="scientific">Human herpesvirus 7 (strain JI)</name>
    <name type="common">HHV-7</name>
    <name type="synonym">Human T lymphotropic virus</name>
    <dbReference type="NCBI Taxonomy" id="57278"/>
    <lineage>
        <taxon>Viruses</taxon>
        <taxon>Duplodnaviria</taxon>
        <taxon>Heunggongvirae</taxon>
        <taxon>Peploviricota</taxon>
        <taxon>Herviviricetes</taxon>
        <taxon>Herpesvirales</taxon>
        <taxon>Orthoherpesviridae</taxon>
        <taxon>Betaherpesvirinae</taxon>
        <taxon>Roseolovirus</taxon>
        <taxon>Roseolovirus humanbeta7</taxon>
        <taxon>Human betaherpesvirus 7</taxon>
    </lineage>
</organism>